<dbReference type="EMBL" id="AE017262">
    <property type="protein sequence ID" value="AAT05132.1"/>
    <property type="molecule type" value="Genomic_DNA"/>
</dbReference>
<dbReference type="RefSeq" id="WP_003725587.1">
    <property type="nucleotide sequence ID" value="NC_002973.6"/>
</dbReference>
<dbReference type="SMR" id="Q71X33"/>
<dbReference type="KEGG" id="lmf:LMOf2365_2366"/>
<dbReference type="HOGENOM" id="CLU_182025_0_0_9"/>
<dbReference type="HAMAP" id="MF_01542">
    <property type="entry name" value="UPF0349"/>
    <property type="match status" value="1"/>
</dbReference>
<dbReference type="InterPro" id="IPR009910">
    <property type="entry name" value="DUF1450"/>
</dbReference>
<dbReference type="InterPro" id="IPR022916">
    <property type="entry name" value="UPF0349"/>
</dbReference>
<dbReference type="NCBIfam" id="NF010190">
    <property type="entry name" value="PRK13669.1"/>
    <property type="match status" value="1"/>
</dbReference>
<dbReference type="Pfam" id="PF07293">
    <property type="entry name" value="DUF1450"/>
    <property type="match status" value="1"/>
</dbReference>
<organism>
    <name type="scientific">Listeria monocytogenes serotype 4b (strain F2365)</name>
    <dbReference type="NCBI Taxonomy" id="265669"/>
    <lineage>
        <taxon>Bacteria</taxon>
        <taxon>Bacillati</taxon>
        <taxon>Bacillota</taxon>
        <taxon>Bacilli</taxon>
        <taxon>Bacillales</taxon>
        <taxon>Listeriaceae</taxon>
        <taxon>Listeria</taxon>
    </lineage>
</organism>
<protein>
    <recommendedName>
        <fullName evidence="1">UPF0349 protein LMOf2365_2366</fullName>
    </recommendedName>
</protein>
<gene>
    <name type="ordered locus">LMOf2365_2366</name>
</gene>
<accession>Q71X33</accession>
<reference key="1">
    <citation type="journal article" date="2004" name="Nucleic Acids Res.">
        <title>Whole genome comparisons of serotype 4b and 1/2a strains of the food-borne pathogen Listeria monocytogenes reveal new insights into the core genome components of this species.</title>
        <authorList>
            <person name="Nelson K.E."/>
            <person name="Fouts D.E."/>
            <person name="Mongodin E.F."/>
            <person name="Ravel J."/>
            <person name="DeBoy R.T."/>
            <person name="Kolonay J.F."/>
            <person name="Rasko D.A."/>
            <person name="Angiuoli S.V."/>
            <person name="Gill S.R."/>
            <person name="Paulsen I.T."/>
            <person name="Peterson J.D."/>
            <person name="White O."/>
            <person name="Nelson W.C."/>
            <person name="Nierman W.C."/>
            <person name="Beanan M.J."/>
            <person name="Brinkac L.M."/>
            <person name="Daugherty S.C."/>
            <person name="Dodson R.J."/>
            <person name="Durkin A.S."/>
            <person name="Madupu R."/>
            <person name="Haft D.H."/>
            <person name="Selengut J."/>
            <person name="Van Aken S.E."/>
            <person name="Khouri H.M."/>
            <person name="Fedorova N."/>
            <person name="Forberger H.A."/>
            <person name="Tran B."/>
            <person name="Kathariou S."/>
            <person name="Wonderling L.D."/>
            <person name="Uhlich G.A."/>
            <person name="Bayles D.O."/>
            <person name="Luchansky J.B."/>
            <person name="Fraser C.M."/>
        </authorList>
    </citation>
    <scope>NUCLEOTIDE SEQUENCE [LARGE SCALE GENOMIC DNA]</scope>
    <source>
        <strain>F2365</strain>
    </source>
</reference>
<sequence>MNPIVEFCVNNLASGADAAFAKLDADDSLDVIEYDCLTYCDLCATSLFALVDGEVVRGETAEELVANIYTFLEENPF</sequence>
<proteinExistence type="inferred from homology"/>
<name>Y2366_LISMF</name>
<evidence type="ECO:0000255" key="1">
    <source>
        <dbReference type="HAMAP-Rule" id="MF_01542"/>
    </source>
</evidence>
<comment type="similarity">
    <text evidence="1">Belongs to the UPF0349 family.</text>
</comment>
<feature type="chain" id="PRO_0000165892" description="UPF0349 protein LMOf2365_2366">
    <location>
        <begin position="1"/>
        <end position="77"/>
    </location>
</feature>